<comment type="function">
    <text evidence="4">Component of the menaquinol:cytochrome c reductase complex. The Rieske protein is a high potential 2Fe-2S protein.</text>
</comment>
<comment type="cofactor">
    <cofactor evidence="1">
        <name>[2Fe-2S] cluster</name>
        <dbReference type="ChEBI" id="CHEBI:190135"/>
    </cofactor>
    <text evidence="1">Binds 1 [2Fe-2S] cluster per subunit.</text>
</comment>
<comment type="subunit">
    <text evidence="4">The main subunits of the menaquinol:cytochrome c complex are a Rieske-type iron-sulfur protein (QcrA), a cytochrome b (QcrB) and a cytochrome c (QcrC).</text>
</comment>
<comment type="similarity">
    <text evidence="3">Belongs to the Rieske iron-sulfur protein family.</text>
</comment>
<evidence type="ECO:0000255" key="1">
    <source>
        <dbReference type="PROSITE-ProRule" id="PRU00628"/>
    </source>
</evidence>
<evidence type="ECO:0000303" key="2">
    <source>
    </source>
</evidence>
<evidence type="ECO:0000305" key="3"/>
<evidence type="ECO:0000305" key="4">
    <source>
    </source>
</evidence>
<dbReference type="EMBL" id="U25535">
    <property type="protein sequence ID" value="AAA85560.1"/>
    <property type="molecule type" value="Genomic_DNA"/>
</dbReference>
<dbReference type="EMBL" id="L47709">
    <property type="protein sequence ID" value="AAB38435.1"/>
    <property type="molecule type" value="Genomic_DNA"/>
</dbReference>
<dbReference type="EMBL" id="AL009126">
    <property type="protein sequence ID" value="CAB14172.1"/>
    <property type="molecule type" value="Genomic_DNA"/>
</dbReference>
<dbReference type="PIR" id="B69687">
    <property type="entry name" value="B69687"/>
</dbReference>
<dbReference type="RefSeq" id="NP_390137.1">
    <property type="nucleotide sequence ID" value="NC_000964.3"/>
</dbReference>
<dbReference type="RefSeq" id="WP_003230627.1">
    <property type="nucleotide sequence ID" value="NZ_OZ025638.1"/>
</dbReference>
<dbReference type="SMR" id="P46911"/>
<dbReference type="FunCoup" id="P46911">
    <property type="interactions" value="380"/>
</dbReference>
<dbReference type="STRING" id="224308.BSU22560"/>
<dbReference type="TCDB" id="3.D.3.4.1">
    <property type="family name" value="the proton-translocating quinol:cytochrome c reductase (qcr) superfamily"/>
</dbReference>
<dbReference type="jPOST" id="P46911"/>
<dbReference type="PaxDb" id="224308-BSU22560"/>
<dbReference type="EnsemblBacteria" id="CAB14172">
    <property type="protein sequence ID" value="CAB14172"/>
    <property type="gene ID" value="BSU_22560"/>
</dbReference>
<dbReference type="GeneID" id="939017"/>
<dbReference type="KEGG" id="bsu:BSU22560"/>
<dbReference type="eggNOG" id="COG0723">
    <property type="taxonomic scope" value="Bacteria"/>
</dbReference>
<dbReference type="InParanoid" id="P46911"/>
<dbReference type="OrthoDB" id="9767869at2"/>
<dbReference type="PhylomeDB" id="P46911"/>
<dbReference type="BioCyc" id="BSUB:BSU22560-MONOMER"/>
<dbReference type="BioCyc" id="MetaCyc:BSU22560-MONOMER"/>
<dbReference type="Proteomes" id="UP000001570">
    <property type="component" value="Chromosome"/>
</dbReference>
<dbReference type="GO" id="GO:0005886">
    <property type="term" value="C:plasma membrane"/>
    <property type="evidence" value="ECO:0000318"/>
    <property type="project" value="GO_Central"/>
</dbReference>
<dbReference type="GO" id="GO:0051537">
    <property type="term" value="F:2 iron, 2 sulfur cluster binding"/>
    <property type="evidence" value="ECO:0007669"/>
    <property type="project" value="UniProtKB-KW"/>
</dbReference>
<dbReference type="GO" id="GO:0046872">
    <property type="term" value="F:metal ion binding"/>
    <property type="evidence" value="ECO:0007669"/>
    <property type="project" value="UniProtKB-KW"/>
</dbReference>
<dbReference type="GO" id="GO:0004497">
    <property type="term" value="F:monooxygenase activity"/>
    <property type="evidence" value="ECO:0007669"/>
    <property type="project" value="UniProtKB-ARBA"/>
</dbReference>
<dbReference type="GO" id="GO:0016491">
    <property type="term" value="F:oxidoreductase activity"/>
    <property type="evidence" value="ECO:0000318"/>
    <property type="project" value="GO_Central"/>
</dbReference>
<dbReference type="GO" id="GO:0016705">
    <property type="term" value="F:oxidoreductase activity, acting on paired donors, with incorporation or reduction of molecular oxygen"/>
    <property type="evidence" value="ECO:0007669"/>
    <property type="project" value="UniProtKB-ARBA"/>
</dbReference>
<dbReference type="CDD" id="cd03467">
    <property type="entry name" value="Rieske"/>
    <property type="match status" value="1"/>
</dbReference>
<dbReference type="FunFam" id="2.102.10.10:FF:000006">
    <property type="entry name" value="Menaquinol-cytochrome c reductase, iron-sulfur subunit"/>
    <property type="match status" value="1"/>
</dbReference>
<dbReference type="Gene3D" id="2.102.10.10">
    <property type="entry name" value="Rieske [2Fe-2S] iron-sulphur domain"/>
    <property type="match status" value="1"/>
</dbReference>
<dbReference type="Gene3D" id="1.20.5.700">
    <property type="entry name" value="Single helix bin"/>
    <property type="match status" value="1"/>
</dbReference>
<dbReference type="InterPro" id="IPR017941">
    <property type="entry name" value="Rieske_2Fe-2S"/>
</dbReference>
<dbReference type="InterPro" id="IPR036922">
    <property type="entry name" value="Rieske_2Fe-2S_sf"/>
</dbReference>
<dbReference type="InterPro" id="IPR014349">
    <property type="entry name" value="Rieske_Fe-S_prot"/>
</dbReference>
<dbReference type="InterPro" id="IPR006311">
    <property type="entry name" value="TAT_signal"/>
</dbReference>
<dbReference type="PANTHER" id="PTHR10134">
    <property type="entry name" value="CYTOCHROME B-C1 COMPLEX SUBUNIT RIESKE, MITOCHONDRIAL"/>
    <property type="match status" value="1"/>
</dbReference>
<dbReference type="Pfam" id="PF00355">
    <property type="entry name" value="Rieske"/>
    <property type="match status" value="1"/>
</dbReference>
<dbReference type="SUPFAM" id="SSF50022">
    <property type="entry name" value="ISP domain"/>
    <property type="match status" value="1"/>
</dbReference>
<dbReference type="PROSITE" id="PS51296">
    <property type="entry name" value="RIESKE"/>
    <property type="match status" value="1"/>
</dbReference>
<dbReference type="PROSITE" id="PS51318">
    <property type="entry name" value="TAT"/>
    <property type="match status" value="1"/>
</dbReference>
<protein>
    <recommendedName>
        <fullName evidence="2">Menaquinol:cytochrome c reductase iron-sulfur subunit</fullName>
    </recommendedName>
    <alternativeName>
        <fullName evidence="2">Cytochrome bc complex, iron-sulfur subunit</fullName>
    </alternativeName>
    <alternativeName>
        <fullName evidence="2">Rieske iron-sulfur protein QcrA</fullName>
    </alternativeName>
</protein>
<organism>
    <name type="scientific">Bacillus subtilis (strain 168)</name>
    <dbReference type="NCBI Taxonomy" id="224308"/>
    <lineage>
        <taxon>Bacteria</taxon>
        <taxon>Bacillati</taxon>
        <taxon>Bacillota</taxon>
        <taxon>Bacilli</taxon>
        <taxon>Bacillales</taxon>
        <taxon>Bacillaceae</taxon>
        <taxon>Bacillus</taxon>
    </lineage>
</organism>
<feature type="chain" id="PRO_0000127786" description="Menaquinol:cytochrome c reductase iron-sulfur subunit">
    <location>
        <begin position="1"/>
        <end position="167"/>
    </location>
</feature>
<feature type="domain" description="Rieske" evidence="1">
    <location>
        <begin position="59"/>
        <end position="158"/>
    </location>
</feature>
<feature type="binding site" evidence="1">
    <location>
        <position position="100"/>
    </location>
    <ligand>
        <name>[2Fe-2S] cluster</name>
        <dbReference type="ChEBI" id="CHEBI:190135"/>
    </ligand>
</feature>
<feature type="binding site" evidence="1">
    <location>
        <position position="102"/>
    </location>
    <ligand>
        <name>[2Fe-2S] cluster</name>
        <dbReference type="ChEBI" id="CHEBI:190135"/>
    </ligand>
</feature>
<feature type="binding site" evidence="1">
    <location>
        <position position="121"/>
    </location>
    <ligand>
        <name>[2Fe-2S] cluster</name>
        <dbReference type="ChEBI" id="CHEBI:190135"/>
    </ligand>
</feature>
<feature type="binding site" evidence="1">
    <location>
        <position position="124"/>
    </location>
    <ligand>
        <name>[2Fe-2S] cluster</name>
        <dbReference type="ChEBI" id="CHEBI:190135"/>
    </ligand>
</feature>
<feature type="disulfide bond" evidence="1">
    <location>
        <begin position="105"/>
        <end position="123"/>
    </location>
</feature>
<sequence>MGGKHDISRRQFLNYTLTGVGGFMAASMLMPMVRFALDPVLKSTGKQDMVQVVSVDELTKEPQRFDFKINQVDAWYESEESRSAWVFKNGDEIVALSPICKHLGCTVNWNSDPKNPNKFFCPCHYGLYEKDGTNVPGTPPLAPLDHYEQEVKDGFLYLGKAKPKGEG</sequence>
<reference key="1">
    <citation type="journal article" date="1995" name="J. Bacteriol.">
        <title>The cytochrome bc complex (menaquinone:cytochrome c reductase) in Bacillus subtilis has a nontraditional subunit organization.</title>
        <authorList>
            <person name="Yu J."/>
            <person name="Hederstedt L."/>
            <person name="Piggot P.J."/>
        </authorList>
    </citation>
    <scope>NUCLEOTIDE SEQUENCE [GENOMIC DNA]</scope>
    <scope>FUNCTION</scope>
    <scope>SUBUNIT</scope>
    <source>
        <strain>168 / BR151</strain>
    </source>
</reference>
<reference key="2">
    <citation type="journal article" date="1996" name="Microbiology">
        <title>Sequence analysis of the Bacillus subtilis chromosome region between the serA and kdg loci cloned in a yeast artificial chromosome.</title>
        <authorList>
            <person name="Sorokin A.V."/>
            <person name="Azevedo V."/>
            <person name="Zumstein E."/>
            <person name="Galleron N."/>
            <person name="Ehrlich S.D."/>
            <person name="Serror P."/>
        </authorList>
    </citation>
    <scope>NUCLEOTIDE SEQUENCE [GENOMIC DNA]</scope>
    <source>
        <strain>168 / Marburg / ATCC 6051 / DSM 10 / JCM 1465 / NBRC 13719 / NCIMB 3610 / NRRL NRS-744 / VKM B-501</strain>
    </source>
</reference>
<reference key="3">
    <citation type="journal article" date="1997" name="Nature">
        <title>The complete genome sequence of the Gram-positive bacterium Bacillus subtilis.</title>
        <authorList>
            <person name="Kunst F."/>
            <person name="Ogasawara N."/>
            <person name="Moszer I."/>
            <person name="Albertini A.M."/>
            <person name="Alloni G."/>
            <person name="Azevedo V."/>
            <person name="Bertero M.G."/>
            <person name="Bessieres P."/>
            <person name="Bolotin A."/>
            <person name="Borchert S."/>
            <person name="Borriss R."/>
            <person name="Boursier L."/>
            <person name="Brans A."/>
            <person name="Braun M."/>
            <person name="Brignell S.C."/>
            <person name="Bron S."/>
            <person name="Brouillet S."/>
            <person name="Bruschi C.V."/>
            <person name="Caldwell B."/>
            <person name="Capuano V."/>
            <person name="Carter N.M."/>
            <person name="Choi S.-K."/>
            <person name="Codani J.-J."/>
            <person name="Connerton I.F."/>
            <person name="Cummings N.J."/>
            <person name="Daniel R.A."/>
            <person name="Denizot F."/>
            <person name="Devine K.M."/>
            <person name="Duesterhoeft A."/>
            <person name="Ehrlich S.D."/>
            <person name="Emmerson P.T."/>
            <person name="Entian K.-D."/>
            <person name="Errington J."/>
            <person name="Fabret C."/>
            <person name="Ferrari E."/>
            <person name="Foulger D."/>
            <person name="Fritz C."/>
            <person name="Fujita M."/>
            <person name="Fujita Y."/>
            <person name="Fuma S."/>
            <person name="Galizzi A."/>
            <person name="Galleron N."/>
            <person name="Ghim S.-Y."/>
            <person name="Glaser P."/>
            <person name="Goffeau A."/>
            <person name="Golightly E.J."/>
            <person name="Grandi G."/>
            <person name="Guiseppi G."/>
            <person name="Guy B.J."/>
            <person name="Haga K."/>
            <person name="Haiech J."/>
            <person name="Harwood C.R."/>
            <person name="Henaut A."/>
            <person name="Hilbert H."/>
            <person name="Holsappel S."/>
            <person name="Hosono S."/>
            <person name="Hullo M.-F."/>
            <person name="Itaya M."/>
            <person name="Jones L.-M."/>
            <person name="Joris B."/>
            <person name="Karamata D."/>
            <person name="Kasahara Y."/>
            <person name="Klaerr-Blanchard M."/>
            <person name="Klein C."/>
            <person name="Kobayashi Y."/>
            <person name="Koetter P."/>
            <person name="Koningstein G."/>
            <person name="Krogh S."/>
            <person name="Kumano M."/>
            <person name="Kurita K."/>
            <person name="Lapidus A."/>
            <person name="Lardinois S."/>
            <person name="Lauber J."/>
            <person name="Lazarevic V."/>
            <person name="Lee S.-M."/>
            <person name="Levine A."/>
            <person name="Liu H."/>
            <person name="Masuda S."/>
            <person name="Mauel C."/>
            <person name="Medigue C."/>
            <person name="Medina N."/>
            <person name="Mellado R.P."/>
            <person name="Mizuno M."/>
            <person name="Moestl D."/>
            <person name="Nakai S."/>
            <person name="Noback M."/>
            <person name="Noone D."/>
            <person name="O'Reilly M."/>
            <person name="Ogawa K."/>
            <person name="Ogiwara A."/>
            <person name="Oudega B."/>
            <person name="Park S.-H."/>
            <person name="Parro V."/>
            <person name="Pohl T.M."/>
            <person name="Portetelle D."/>
            <person name="Porwollik S."/>
            <person name="Prescott A.M."/>
            <person name="Presecan E."/>
            <person name="Pujic P."/>
            <person name="Purnelle B."/>
            <person name="Rapoport G."/>
            <person name="Rey M."/>
            <person name="Reynolds S."/>
            <person name="Rieger M."/>
            <person name="Rivolta C."/>
            <person name="Rocha E."/>
            <person name="Roche B."/>
            <person name="Rose M."/>
            <person name="Sadaie Y."/>
            <person name="Sato T."/>
            <person name="Scanlan E."/>
            <person name="Schleich S."/>
            <person name="Schroeter R."/>
            <person name="Scoffone F."/>
            <person name="Sekiguchi J."/>
            <person name="Sekowska A."/>
            <person name="Seror S.J."/>
            <person name="Serror P."/>
            <person name="Shin B.-S."/>
            <person name="Soldo B."/>
            <person name="Sorokin A."/>
            <person name="Tacconi E."/>
            <person name="Takagi T."/>
            <person name="Takahashi H."/>
            <person name="Takemaru K."/>
            <person name="Takeuchi M."/>
            <person name="Tamakoshi A."/>
            <person name="Tanaka T."/>
            <person name="Terpstra P."/>
            <person name="Tognoni A."/>
            <person name="Tosato V."/>
            <person name="Uchiyama S."/>
            <person name="Vandenbol M."/>
            <person name="Vannier F."/>
            <person name="Vassarotti A."/>
            <person name="Viari A."/>
            <person name="Wambutt R."/>
            <person name="Wedler E."/>
            <person name="Wedler H."/>
            <person name="Weitzenegger T."/>
            <person name="Winters P."/>
            <person name="Wipat A."/>
            <person name="Yamamoto H."/>
            <person name="Yamane K."/>
            <person name="Yasumoto K."/>
            <person name="Yata K."/>
            <person name="Yoshida K."/>
            <person name="Yoshikawa H.-F."/>
            <person name="Zumstein E."/>
            <person name="Yoshikawa H."/>
            <person name="Danchin A."/>
        </authorList>
    </citation>
    <scope>NUCLEOTIDE SEQUENCE [LARGE SCALE GENOMIC DNA]</scope>
    <source>
        <strain>168</strain>
    </source>
</reference>
<keyword id="KW-0001">2Fe-2S</keyword>
<keyword id="KW-1015">Disulfide bond</keyword>
<keyword id="KW-0249">Electron transport</keyword>
<keyword id="KW-0408">Iron</keyword>
<keyword id="KW-0411">Iron-sulfur</keyword>
<keyword id="KW-0479">Metal-binding</keyword>
<keyword id="KW-0560">Oxidoreductase</keyword>
<keyword id="KW-1185">Reference proteome</keyword>
<keyword id="KW-0813">Transport</keyword>
<gene>
    <name type="primary">qcrA</name>
    <name type="synonym">bfcA</name>
    <name type="ordered locus">BSU22560</name>
</gene>
<accession>P46911</accession>
<proteinExistence type="evidence at protein level"/>
<name>QCRA_BACSU</name>